<comment type="function">
    <text evidence="1">Self assembles to form an icosahedral capsid, about 50 nm in diameter, nm, composed of 420 subunits of the viral capsid protein. The capsid encapsulates the genomic dsDNA. Following virus entry into host cell, provides nuclear import of the viral genome. Virus particles do not enter the nucleus, but dock at the nuclear membrane through the interaction with host importins (By similarity).</text>
</comment>
<comment type="subunit">
    <text evidence="1">Interacts (via nuclear localization signal) with host importin alpha.</text>
</comment>
<comment type="subcellular location">
    <subcellularLocation>
        <location evidence="4">Virion</location>
    </subcellularLocation>
    <subcellularLocation>
        <location evidence="4">Host nucleus</location>
    </subcellularLocation>
</comment>
<comment type="similarity">
    <text evidence="4">Belongs to the caulimoviridae capsid protein family.</text>
</comment>
<accession>P09519</accession>
<proteinExistence type="inferred from homology"/>
<dbReference type="EMBL" id="X06166">
    <property type="protein sequence ID" value="CAA29526.1"/>
    <property type="molecule type" value="Genomic_DNA"/>
</dbReference>
<dbReference type="PIR" id="S01282">
    <property type="entry name" value="VCCVFM"/>
</dbReference>
<dbReference type="RefSeq" id="NP_619547.1">
    <property type="nucleotide sequence ID" value="NC_003554.1"/>
</dbReference>
<dbReference type="SMR" id="P09519"/>
<dbReference type="KEGG" id="vg:940155"/>
<dbReference type="Proteomes" id="UP000008622">
    <property type="component" value="Segment"/>
</dbReference>
<dbReference type="GO" id="GO:0043657">
    <property type="term" value="C:host cell"/>
    <property type="evidence" value="ECO:0007669"/>
    <property type="project" value="GOC"/>
</dbReference>
<dbReference type="GO" id="GO:0042025">
    <property type="term" value="C:host cell nucleus"/>
    <property type="evidence" value="ECO:0007669"/>
    <property type="project" value="UniProtKB-SubCell"/>
</dbReference>
<dbReference type="GO" id="GO:0039620">
    <property type="term" value="C:T=7 icosahedral viral capsid"/>
    <property type="evidence" value="ECO:0007669"/>
    <property type="project" value="UniProtKB-KW"/>
</dbReference>
<dbReference type="GO" id="GO:0003676">
    <property type="term" value="F:nucleic acid binding"/>
    <property type="evidence" value="ECO:0007669"/>
    <property type="project" value="InterPro"/>
</dbReference>
<dbReference type="GO" id="GO:0005198">
    <property type="term" value="F:structural molecule activity"/>
    <property type="evidence" value="ECO:0007669"/>
    <property type="project" value="InterPro"/>
</dbReference>
<dbReference type="GO" id="GO:0008270">
    <property type="term" value="F:zinc ion binding"/>
    <property type="evidence" value="ECO:0007669"/>
    <property type="project" value="UniProtKB-KW"/>
</dbReference>
<dbReference type="GO" id="GO:0046718">
    <property type="term" value="P:symbiont entry into host cell"/>
    <property type="evidence" value="ECO:0007669"/>
    <property type="project" value="UniProtKB-KW"/>
</dbReference>
<dbReference type="GO" id="GO:0075732">
    <property type="term" value="P:viral penetration into host nucleus"/>
    <property type="evidence" value="ECO:0007669"/>
    <property type="project" value="UniProtKB-KW"/>
</dbReference>
<dbReference type="InterPro" id="IPR001988">
    <property type="entry name" value="Caulimo_coat"/>
</dbReference>
<dbReference type="InterPro" id="IPR001878">
    <property type="entry name" value="Znf_CCHC"/>
</dbReference>
<dbReference type="InterPro" id="IPR036875">
    <property type="entry name" value="Znf_CCHC_sf"/>
</dbReference>
<dbReference type="PRINTS" id="PR00221">
    <property type="entry name" value="CAULIMOCOAT"/>
</dbReference>
<dbReference type="SMART" id="SM00343">
    <property type="entry name" value="ZnF_C2HC"/>
    <property type="match status" value="1"/>
</dbReference>
<dbReference type="SUPFAM" id="SSF57756">
    <property type="entry name" value="Retrovirus zinc finger-like domains"/>
    <property type="match status" value="1"/>
</dbReference>
<dbReference type="PROSITE" id="PS50158">
    <property type="entry name" value="ZF_CCHC"/>
    <property type="match status" value="1"/>
</dbReference>
<organismHost>
    <name type="scientific">Scrophularia californica</name>
    <name type="common">California bee plant</name>
    <dbReference type="NCBI Taxonomy" id="46031"/>
</organismHost>
<protein>
    <recommendedName>
        <fullName>Probable capsid protein</fullName>
        <shortName>CP</shortName>
    </recommendedName>
    <alternativeName>
        <fullName>Coat protein</fullName>
    </alternativeName>
</protein>
<feature type="chain" id="PRO_0000222035" description="Probable capsid protein">
    <location>
        <begin position="1"/>
        <end position="489"/>
    </location>
</feature>
<feature type="zinc finger region" description="CCHC-type" evidence="2">
    <location>
        <begin position="409"/>
        <end position="426"/>
    </location>
</feature>
<feature type="region of interest" description="Disordered" evidence="3">
    <location>
        <begin position="87"/>
        <end position="111"/>
    </location>
</feature>
<feature type="region of interest" description="Disordered" evidence="3">
    <location>
        <begin position="466"/>
        <end position="489"/>
    </location>
</feature>
<feature type="short sequence motif" description="Nuclear localization signal" evidence="1">
    <location>
        <begin position="107"/>
        <end position="110"/>
    </location>
</feature>
<feature type="compositionally biased region" description="Basic and acidic residues" evidence="3">
    <location>
        <begin position="87"/>
        <end position="101"/>
    </location>
</feature>
<keyword id="KW-0167">Capsid protein</keyword>
<keyword id="KW-1048">Host nucleus</keyword>
<keyword id="KW-0479">Metal-binding</keyword>
<keyword id="KW-1185">Reference proteome</keyword>
<keyword id="KW-1145">T=7 icosahedral capsid protein</keyword>
<keyword id="KW-1163">Viral penetration into host nucleus</keyword>
<keyword id="KW-0946">Virion</keyword>
<keyword id="KW-1160">Virus entry into host cell</keyword>
<keyword id="KW-0862">Zinc</keyword>
<keyword id="KW-0863">Zinc-finger</keyword>
<evidence type="ECO:0000250" key="1"/>
<evidence type="ECO:0000255" key="2">
    <source>
        <dbReference type="PROSITE-ProRule" id="PRU00047"/>
    </source>
</evidence>
<evidence type="ECO:0000256" key="3">
    <source>
        <dbReference type="SAM" id="MobiDB-lite"/>
    </source>
</evidence>
<evidence type="ECO:0000305" key="4"/>
<organism>
    <name type="scientific">Figwort mosaic virus (strain DxS)</name>
    <name type="common">FMV</name>
    <dbReference type="NCBI Taxonomy" id="10650"/>
    <lineage>
        <taxon>Viruses</taxon>
        <taxon>Riboviria</taxon>
        <taxon>Pararnavirae</taxon>
        <taxon>Artverviricota</taxon>
        <taxon>Revtraviricetes</taxon>
        <taxon>Ortervirales</taxon>
        <taxon>Caulimoviridae</taxon>
        <taxon>Caulimovirus</taxon>
        <taxon>Caulimovirus tesselloscrophulariae</taxon>
    </lineage>
</organism>
<gene>
    <name type="ORF">ORF IV</name>
</gene>
<reference key="1">
    <citation type="journal article" date="1987" name="Nucleic Acids Res.">
        <title>Sequence of figwort mosaic virus DNA (caulimovirus group).</title>
        <authorList>
            <person name="Richins R.D."/>
            <person name="Scholthof H.B."/>
            <person name="Shepherd R.J."/>
        </authorList>
    </citation>
    <scope>NUCLEOTIDE SEQUENCE [GENOMIC DNA]</scope>
</reference>
<sequence>MATKKMRISEKLWDSLEKDECNIDEVVQLMSLDEEELITKFAQEVSLRIRYLDEKPNEISFIAEATEDYSEPETESSDEETYFQQIRMERGESSETKREQQDLGATRKRKIEERNPFYTPPVHKGIPSSTGRGTEISTLNLDCISSFEERKVMIDKWFNEISLIIQTNKESFDTSLKVLTLMEHRTEGIAKSFIKQATWDILITPEKIIEEVLTGFYTMFIGLDYALSAEKEEEKRIKKAEELLIKSQLCNICELDNFTCFYEKQINQLKFEDFPKWIELYLGKIPIIGKQSKERWDNEKSFTTKYSLAFAKRIIQEEIAKYCDFQRTSKKLKNFSKKCCSKNSLDPLVSFGCRDTKKKDFKKSSKYKAYKKKKTLKKLWKKKKRKFTPGKYFSKKKPEKFCPQGRKKCRCWICTEEGHYANECPNRKSHQEKVKILIHGMNEGYYPLEDAYTGNLEVFSMEIIEETTSEEESTTDSDSSSSDDEQLSF</sequence>
<name>CAPSD_FMVD</name>